<gene>
    <name evidence="1" type="primary">thrB</name>
    <name type="ordered locus">STK_05050</name>
</gene>
<evidence type="ECO:0000255" key="1">
    <source>
        <dbReference type="HAMAP-Rule" id="MF_00384"/>
    </source>
</evidence>
<dbReference type="EC" id="2.7.1.39" evidence="1"/>
<dbReference type="EMBL" id="BA000023">
    <property type="protein sequence ID" value="BAB65500.1"/>
    <property type="molecule type" value="Genomic_DNA"/>
</dbReference>
<dbReference type="RefSeq" id="WP_010978483.1">
    <property type="nucleotide sequence ID" value="NC_003106.2"/>
</dbReference>
<dbReference type="SMR" id="Q975A7"/>
<dbReference type="STRING" id="273063.STK_05050"/>
<dbReference type="GeneID" id="1458450"/>
<dbReference type="KEGG" id="sto:STK_05050"/>
<dbReference type="PATRIC" id="fig|273063.9.peg.583"/>
<dbReference type="eggNOG" id="arCOG01027">
    <property type="taxonomic scope" value="Archaea"/>
</dbReference>
<dbReference type="OrthoDB" id="28273at2157"/>
<dbReference type="UniPathway" id="UPA00050">
    <property type="reaction ID" value="UER00064"/>
</dbReference>
<dbReference type="Proteomes" id="UP000001015">
    <property type="component" value="Chromosome"/>
</dbReference>
<dbReference type="GO" id="GO:0005737">
    <property type="term" value="C:cytoplasm"/>
    <property type="evidence" value="ECO:0007669"/>
    <property type="project" value="UniProtKB-SubCell"/>
</dbReference>
<dbReference type="GO" id="GO:0005524">
    <property type="term" value="F:ATP binding"/>
    <property type="evidence" value="ECO:0007669"/>
    <property type="project" value="UniProtKB-UniRule"/>
</dbReference>
<dbReference type="GO" id="GO:0004413">
    <property type="term" value="F:homoserine kinase activity"/>
    <property type="evidence" value="ECO:0007669"/>
    <property type="project" value="UniProtKB-UniRule"/>
</dbReference>
<dbReference type="GO" id="GO:0009088">
    <property type="term" value="P:threonine biosynthetic process"/>
    <property type="evidence" value="ECO:0007669"/>
    <property type="project" value="UniProtKB-UniRule"/>
</dbReference>
<dbReference type="Gene3D" id="3.30.230.10">
    <property type="match status" value="1"/>
</dbReference>
<dbReference type="Gene3D" id="3.30.70.890">
    <property type="entry name" value="GHMP kinase, C-terminal domain"/>
    <property type="match status" value="1"/>
</dbReference>
<dbReference type="HAMAP" id="MF_00384">
    <property type="entry name" value="Homoser_kinase"/>
    <property type="match status" value="1"/>
</dbReference>
<dbReference type="InterPro" id="IPR013750">
    <property type="entry name" value="GHMP_kinase_C_dom"/>
</dbReference>
<dbReference type="InterPro" id="IPR036554">
    <property type="entry name" value="GHMP_kinase_C_sf"/>
</dbReference>
<dbReference type="InterPro" id="IPR006204">
    <property type="entry name" value="GHMP_kinase_N_dom"/>
</dbReference>
<dbReference type="InterPro" id="IPR006203">
    <property type="entry name" value="GHMP_knse_ATP-bd_CS"/>
</dbReference>
<dbReference type="InterPro" id="IPR000870">
    <property type="entry name" value="Homoserine_kinase"/>
</dbReference>
<dbReference type="InterPro" id="IPR020568">
    <property type="entry name" value="Ribosomal_Su5_D2-typ_SF"/>
</dbReference>
<dbReference type="InterPro" id="IPR014721">
    <property type="entry name" value="Ribsml_uS5_D2-typ_fold_subgr"/>
</dbReference>
<dbReference type="NCBIfam" id="NF002288">
    <property type="entry name" value="PRK01212.1-4"/>
    <property type="match status" value="1"/>
</dbReference>
<dbReference type="NCBIfam" id="TIGR00191">
    <property type="entry name" value="thrB"/>
    <property type="match status" value="1"/>
</dbReference>
<dbReference type="PANTHER" id="PTHR20861:SF1">
    <property type="entry name" value="HOMOSERINE KINASE"/>
    <property type="match status" value="1"/>
</dbReference>
<dbReference type="PANTHER" id="PTHR20861">
    <property type="entry name" value="HOMOSERINE/4-DIPHOSPHOCYTIDYL-2-C-METHYL-D-ERYTHRITOL KINASE"/>
    <property type="match status" value="1"/>
</dbReference>
<dbReference type="Pfam" id="PF08544">
    <property type="entry name" value="GHMP_kinases_C"/>
    <property type="match status" value="1"/>
</dbReference>
<dbReference type="Pfam" id="PF00288">
    <property type="entry name" value="GHMP_kinases_N"/>
    <property type="match status" value="1"/>
</dbReference>
<dbReference type="PIRSF" id="PIRSF000676">
    <property type="entry name" value="Homoser_kin"/>
    <property type="match status" value="1"/>
</dbReference>
<dbReference type="PRINTS" id="PR00958">
    <property type="entry name" value="HOMSERKINASE"/>
</dbReference>
<dbReference type="SUPFAM" id="SSF55060">
    <property type="entry name" value="GHMP Kinase, C-terminal domain"/>
    <property type="match status" value="1"/>
</dbReference>
<dbReference type="SUPFAM" id="SSF54211">
    <property type="entry name" value="Ribosomal protein S5 domain 2-like"/>
    <property type="match status" value="1"/>
</dbReference>
<dbReference type="PROSITE" id="PS00627">
    <property type="entry name" value="GHMP_KINASES_ATP"/>
    <property type="match status" value="1"/>
</dbReference>
<feature type="chain" id="PRO_0000156651" description="Homoserine kinase">
    <location>
        <begin position="1"/>
        <end position="306"/>
    </location>
</feature>
<feature type="binding site" evidence="1">
    <location>
        <begin position="84"/>
        <end position="94"/>
    </location>
    <ligand>
        <name>ATP</name>
        <dbReference type="ChEBI" id="CHEBI:30616"/>
    </ligand>
</feature>
<proteinExistence type="inferred from homology"/>
<reference key="1">
    <citation type="journal article" date="2001" name="DNA Res.">
        <title>Complete genome sequence of an aerobic thermoacidophilic Crenarchaeon, Sulfolobus tokodaii strain7.</title>
        <authorList>
            <person name="Kawarabayasi Y."/>
            <person name="Hino Y."/>
            <person name="Horikawa H."/>
            <person name="Jin-no K."/>
            <person name="Takahashi M."/>
            <person name="Sekine M."/>
            <person name="Baba S."/>
            <person name="Ankai A."/>
            <person name="Kosugi H."/>
            <person name="Hosoyama A."/>
            <person name="Fukui S."/>
            <person name="Nagai Y."/>
            <person name="Nishijima K."/>
            <person name="Otsuka R."/>
            <person name="Nakazawa H."/>
            <person name="Takamiya M."/>
            <person name="Kato Y."/>
            <person name="Yoshizawa T."/>
            <person name="Tanaka T."/>
            <person name="Kudoh Y."/>
            <person name="Yamazaki J."/>
            <person name="Kushida N."/>
            <person name="Oguchi A."/>
            <person name="Aoki K."/>
            <person name="Masuda S."/>
            <person name="Yanagii M."/>
            <person name="Nishimura M."/>
            <person name="Yamagishi A."/>
            <person name="Oshima T."/>
            <person name="Kikuchi H."/>
        </authorList>
    </citation>
    <scope>NUCLEOTIDE SEQUENCE [LARGE SCALE GENOMIC DNA]</scope>
    <source>
        <strain>DSM 16993 / JCM 10545 / NBRC 100140 / 7</strain>
    </source>
</reference>
<name>KHSE_SULTO</name>
<protein>
    <recommendedName>
        <fullName evidence="1">Homoserine kinase</fullName>
        <shortName evidence="1">HK</shortName>
        <shortName evidence="1">HSK</shortName>
        <ecNumber evidence="1">2.7.1.39</ecNumber>
    </recommendedName>
</protein>
<organism>
    <name type="scientific">Sulfurisphaera tokodaii (strain DSM 16993 / JCM 10545 / NBRC 100140 / 7)</name>
    <name type="common">Sulfolobus tokodaii</name>
    <dbReference type="NCBI Taxonomy" id="273063"/>
    <lineage>
        <taxon>Archaea</taxon>
        <taxon>Thermoproteota</taxon>
        <taxon>Thermoprotei</taxon>
        <taxon>Sulfolobales</taxon>
        <taxon>Sulfolobaceae</taxon>
        <taxon>Sulfurisphaera</taxon>
    </lineage>
</organism>
<accession>Q975A7</accession>
<sequence length="306" mass="33019">MIVKAFSSSANLGAGYDILALAHDAFEDTIEIYAQNSSELDIKVEGNGVPLSIDKNSASFALLELLRSYDIKAKIRLKIIKGIPAGLGLGSSGASAAAAVYAANEIFKLNLSRQELVNFAMKGEIASSGSPHPDNVAASLVGGLVSVLNSNPVKVEQVPLNLEFQIILIIPFVRIEAKTKKAREMVPKQIDTSKYVTNARYLSSLLLGFIKGDRELVRLGLNDEIIEKAREPLFPHYPKIKEISLLYDAIGACVSGAGPTIAIFVDSKSDKNKILGESLNVCKAYGYECTYKIAKVSGGAWVERRD</sequence>
<keyword id="KW-0028">Amino-acid biosynthesis</keyword>
<keyword id="KW-0067">ATP-binding</keyword>
<keyword id="KW-0963">Cytoplasm</keyword>
<keyword id="KW-0418">Kinase</keyword>
<keyword id="KW-0547">Nucleotide-binding</keyword>
<keyword id="KW-1185">Reference proteome</keyword>
<keyword id="KW-0791">Threonine biosynthesis</keyword>
<keyword id="KW-0808">Transferase</keyword>
<comment type="function">
    <text evidence="1">Catalyzes the ATP-dependent phosphorylation of L-homoserine to L-homoserine phosphate.</text>
</comment>
<comment type="catalytic activity">
    <reaction evidence="1">
        <text>L-homoserine + ATP = O-phospho-L-homoserine + ADP + H(+)</text>
        <dbReference type="Rhea" id="RHEA:13985"/>
        <dbReference type="ChEBI" id="CHEBI:15378"/>
        <dbReference type="ChEBI" id="CHEBI:30616"/>
        <dbReference type="ChEBI" id="CHEBI:57476"/>
        <dbReference type="ChEBI" id="CHEBI:57590"/>
        <dbReference type="ChEBI" id="CHEBI:456216"/>
        <dbReference type="EC" id="2.7.1.39"/>
    </reaction>
</comment>
<comment type="pathway">
    <text evidence="1">Amino-acid biosynthesis; L-threonine biosynthesis; L-threonine from L-aspartate: step 4/5.</text>
</comment>
<comment type="subcellular location">
    <subcellularLocation>
        <location evidence="1">Cytoplasm</location>
    </subcellularLocation>
</comment>
<comment type="similarity">
    <text evidence="1">Belongs to the GHMP kinase family. Homoserine kinase subfamily.</text>
</comment>